<gene>
    <name evidence="1" type="primary">P</name>
</gene>
<evidence type="ECO:0000255" key="1">
    <source>
        <dbReference type="HAMAP-Rule" id="MF_04073"/>
    </source>
</evidence>
<evidence type="ECO:0000256" key="2">
    <source>
        <dbReference type="SAM" id="MobiDB-lite"/>
    </source>
</evidence>
<organism>
    <name type="scientific">Hepatitis B virus genotype D subtype ayw (isolate Australia/AustKW/1991)</name>
    <name type="common">HBV-D</name>
    <dbReference type="NCBI Taxonomy" id="489488"/>
    <lineage>
        <taxon>Viruses</taxon>
        <taxon>Riboviria</taxon>
        <taxon>Pararnavirae</taxon>
        <taxon>Artverviricota</taxon>
        <taxon>Revtraviricetes</taxon>
        <taxon>Blubervirales</taxon>
        <taxon>Hepadnaviridae</taxon>
        <taxon>Orthohepadnavirus</taxon>
        <taxon>Hepatitis B virus</taxon>
        <taxon>hepatitis B virus genotype D</taxon>
    </lineage>
</organism>
<keyword id="KW-0235">DNA replication</keyword>
<keyword id="KW-0238">DNA-binding</keyword>
<keyword id="KW-0239">DNA-directed DNA polymerase</keyword>
<keyword id="KW-0255">Endonuclease</keyword>
<keyword id="KW-0945">Host-virus interaction</keyword>
<keyword id="KW-0378">Hydrolase</keyword>
<keyword id="KW-1090">Inhibition of host innate immune response by virus</keyword>
<keyword id="KW-1113">Inhibition of host RLR pathway by virus</keyword>
<keyword id="KW-0460">Magnesium</keyword>
<keyword id="KW-0479">Metal-binding</keyword>
<keyword id="KW-0511">Multifunctional enzyme</keyword>
<keyword id="KW-0540">Nuclease</keyword>
<keyword id="KW-0548">Nucleotidyltransferase</keyword>
<keyword id="KW-0695">RNA-directed DNA polymerase</keyword>
<keyword id="KW-0808">Transferase</keyword>
<keyword id="KW-0899">Viral immunoevasion</keyword>
<sequence>MPLSYQHFRKLLLLDNEAGPLEEELPRLADEDLNRRVAEDLNLGNLNVSIPWTHKVGNFTGLYSSSVPVFNPHWKTPSFPNIHLHQDIIKKCEQFVGPLTVNEKRRLKLIMPARFYPNFTKYLPLDKGIKPYYPEHLVNHYFHTRHYLHTLWKAGILYKRVSTHSASFCGSPYSWEQELQHGAESFHQQSSGILSRPSVGSSLQSKHQQSRLGLQSQQGHLARRQQGRSWSIRTRVHPTARRPSGVEPSGSGHNANLASKSASCLYQSTVRTAAYPAVSTSENHSSSGHAVELHNLPPNSARSQSERPVSPCWWLQFRNSKPCSDYCLSHIVNLLEDWGPCAEHGEHHIRIPRTPARVTGGVFLVDKNPHNTAESRLVVDFSQFSRGNYRVSWPKFAVPNLQSLTNLLSSNLCWLSLDVSAAFYHLPLHPAAMPHLLVGSSGLSRYVARLSSNSRIINHQHGTLQNLHDSCSRNLYVSLLLLYKTFGWKLHLYSHPIILGFRKIPMGVGLSPFLLAQFTSAICSVVRRAFPHCLAFSYMDDVVLGAKSVQHLESLFTAVTNFLLSLGIHLNPNKTKRWGYSLNFMGYVIGSWGSLPQDHIRHKIKECFRKLPVHRPIDWKVCQRIVGLLGFAAPFTQCGYPALMPLYACIQSKQAFTFSPTYKAFLCKQYLNLYPVARQRPGLCQVFADATPTGWGLVMGHQRMRGTFSAPLPIHTAELLAACFARSRSGANILGTDNSVVLSRKYTSFPWLLGCAANWILRGTSFVYVPSALNPADDPSRGRLGPCRPLLHLPFRPTTGRTSLYADSPSVPSHLPDRVHFASPLHVAWRPP</sequence>
<comment type="function">
    <text evidence="1">Multifunctional enzyme that converts the viral RNA genome into dsDNA in viral cytoplasmic capsids. This enzyme displays a DNA polymerase activity that can copy either DNA or RNA templates, and a ribonuclease H (RNase H) activity that cleaves the RNA strand of RNA-DNA heteroduplexes in a partially processive 3'- to 5'-endonucleasic mode. Neo-synthesized pregenomic RNA (pgRNA) are encapsidated together with the P protein, and reverse-transcribed inside the nucleocapsid. Initiation of reverse-transcription occurs first by binding the epsilon loop on the pgRNA genome, and is initiated by protein priming, thereby the 5'-end of (-)DNA is covalently linked to P protein. Partial (+)DNA is synthesized from the (-)DNA template and generates the relaxed circular DNA (RC-DNA) genome. After budding and infection, the RC-DNA migrates in the nucleus, and is converted into a plasmid-like covalently closed circular DNA (cccDNA). The activity of P protein does not seem to be necessary for cccDNA generation, and is presumably released from (+)DNA by host nuclear DNA repair machinery.</text>
</comment>
<comment type="catalytic activity">
    <reaction evidence="1">
        <text>DNA(n) + a 2'-deoxyribonucleoside 5'-triphosphate = DNA(n+1) + diphosphate</text>
        <dbReference type="Rhea" id="RHEA:22508"/>
        <dbReference type="Rhea" id="RHEA-COMP:17339"/>
        <dbReference type="Rhea" id="RHEA-COMP:17340"/>
        <dbReference type="ChEBI" id="CHEBI:33019"/>
        <dbReference type="ChEBI" id="CHEBI:61560"/>
        <dbReference type="ChEBI" id="CHEBI:173112"/>
        <dbReference type="EC" id="2.7.7.7"/>
    </reaction>
</comment>
<comment type="catalytic activity">
    <reaction evidence="1">
        <text>DNA(n) + a 2'-deoxyribonucleoside 5'-triphosphate = DNA(n+1) + diphosphate</text>
        <dbReference type="Rhea" id="RHEA:22508"/>
        <dbReference type="Rhea" id="RHEA-COMP:17339"/>
        <dbReference type="Rhea" id="RHEA-COMP:17340"/>
        <dbReference type="ChEBI" id="CHEBI:33019"/>
        <dbReference type="ChEBI" id="CHEBI:61560"/>
        <dbReference type="ChEBI" id="CHEBI:173112"/>
        <dbReference type="EC" id="2.7.7.49"/>
    </reaction>
</comment>
<comment type="catalytic activity">
    <reaction evidence="1">
        <text>Endonucleolytic cleavage to 5'-phosphomonoester.</text>
        <dbReference type="EC" id="3.1.26.4"/>
    </reaction>
</comment>
<comment type="activity regulation">
    <text evidence="1">Activated by host HSP70 and HSP40 in vitro to be able to bind the epsilon loop of the pgRNA. Because deletion of the RNase H region renders the protein partly chaperone-independent, the chaperones may be needed indirectly to relieve occlusion of the RNA-binding site by this domain. Inhibited by several reverse-transcriptase inhibitors: Lamivudine, Adefovir and Entecavir.</text>
</comment>
<comment type="domain">
    <text evidence="1">Terminal protein domain (TP) is hepadnavirus-specific. Spacer domain is highly variable and separates the TP and RT domains. Polymerase/reverse-transcriptase domain (RT) and ribonuclease H domain (RH) are similar to retrovirus reverse transcriptase/RNase H.</text>
</comment>
<comment type="domain">
    <text evidence="1">The polymerase/reverse transcriptase (RT) and ribonuclease H (RH) domains are structured in five subdomains: finger, palm, thumb, connection and RNase H. Within the palm subdomain, the 'primer grip' region is thought to be involved in the positioning of the primer terminus for accommodating the incoming nucleotide. The RH domain stabilizes the association of RT with primer-template.</text>
</comment>
<comment type="miscellaneous">
    <text evidence="1">Hepadnaviral virions contain probably just one P protein molecule per particle.</text>
</comment>
<comment type="similarity">
    <text evidence="1">Belongs to the hepadnaviridae P protein family.</text>
</comment>
<feature type="chain" id="PRO_0000323267" description="Protein P">
    <location>
        <begin position="1"/>
        <end position="832"/>
    </location>
</feature>
<feature type="domain" description="Reverse transcriptase" evidence="1">
    <location>
        <begin position="346"/>
        <end position="589"/>
    </location>
</feature>
<feature type="region of interest" description="Terminal protein domain (TP)" evidence="1">
    <location>
        <begin position="1"/>
        <end position="177"/>
    </location>
</feature>
<feature type="region of interest" description="Spacer" evidence="1">
    <location>
        <begin position="178"/>
        <end position="335"/>
    </location>
</feature>
<feature type="region of interest" description="Disordered" evidence="2">
    <location>
        <begin position="186"/>
        <end position="255"/>
    </location>
</feature>
<feature type="region of interest" description="Disordered" evidence="2">
    <location>
        <begin position="280"/>
        <end position="305"/>
    </location>
</feature>
<feature type="region of interest" description="Polymerase/reverse transcriptase domain (RT)" evidence="1">
    <location>
        <begin position="336"/>
        <end position="679"/>
    </location>
</feature>
<feature type="compositionally biased region" description="Polar residues" evidence="2">
    <location>
        <begin position="186"/>
        <end position="206"/>
    </location>
</feature>
<feature type="compositionally biased region" description="Low complexity" evidence="2">
    <location>
        <begin position="210"/>
        <end position="220"/>
    </location>
</feature>
<feature type="binding site" evidence="1">
    <location>
        <position position="418"/>
    </location>
    <ligand>
        <name>Mg(2+)</name>
        <dbReference type="ChEBI" id="CHEBI:18420"/>
        <note>catalytic</note>
    </ligand>
</feature>
<feature type="binding site" evidence="1">
    <location>
        <position position="540"/>
    </location>
    <ligand>
        <name>Mg(2+)</name>
        <dbReference type="ChEBI" id="CHEBI:18420"/>
        <note>catalytic</note>
    </ligand>
</feature>
<feature type="binding site" evidence="1">
    <location>
        <position position="541"/>
    </location>
    <ligand>
        <name>Mg(2+)</name>
        <dbReference type="ChEBI" id="CHEBI:18420"/>
        <note>catalytic</note>
    </ligand>
</feature>
<feature type="site" description="Priming of reverse-transcription by covalently linking the first nucleotide of the (-)DNA" evidence="1">
    <location>
        <position position="63"/>
    </location>
</feature>
<proteinExistence type="inferred from homology"/>
<reference key="1">
    <citation type="journal article" date="2001" name="J. Gen. Virol.">
        <title>A novel variant genotype C of hepatitis B virus identified in isolates from Australian Aborigines: complete genome sequence and phylogenetic relatedness.</title>
        <authorList>
            <person name="Sugauchi F."/>
            <person name="Mizokami M."/>
            <person name="Orito E."/>
            <person name="Ohno T."/>
            <person name="Kato H."/>
            <person name="Suzuki S."/>
            <person name="Kimura Y."/>
            <person name="Ueda R."/>
            <person name="Butterworth L.A."/>
            <person name="Cooksley W.G."/>
        </authorList>
    </citation>
    <scope>NUCLEOTIDE SEQUENCE [GENOMIC DNA]</scope>
</reference>
<reference key="2">
    <citation type="journal article" date="2007" name="World J. Gastroenterol.">
        <title>Hepatitis B virus replication.</title>
        <authorList>
            <person name="Beck J."/>
            <person name="Nassal M."/>
        </authorList>
    </citation>
    <scope>REVIEW</scope>
</reference>
<name>DPOL_HBVD5</name>
<protein>
    <recommendedName>
        <fullName evidence="1">Protein P</fullName>
    </recommendedName>
    <domain>
        <recommendedName>
            <fullName evidence="1">DNA-directed DNA polymerase</fullName>
            <ecNumber evidence="1">2.7.7.7</ecNumber>
        </recommendedName>
    </domain>
    <domain>
        <recommendedName>
            <fullName evidence="1">RNA-directed DNA polymerase</fullName>
            <ecNumber evidence="1">2.7.7.49</ecNumber>
        </recommendedName>
    </domain>
    <domain>
        <recommendedName>
            <fullName evidence="1">Ribonuclease H</fullName>
            <ecNumber evidence="1">3.1.26.4</ecNumber>
        </recommendedName>
    </domain>
</protein>
<accession>P0C679</accession>
<dbReference type="EC" id="2.7.7.7" evidence="1"/>
<dbReference type="EC" id="2.7.7.49" evidence="1"/>
<dbReference type="EC" id="3.1.26.4" evidence="1"/>
<dbReference type="EMBL" id="AB048701">
    <property type="status" value="NOT_ANNOTATED_CDS"/>
    <property type="molecule type" value="Genomic_DNA"/>
</dbReference>
<dbReference type="Proteomes" id="UP000007932">
    <property type="component" value="Genome"/>
</dbReference>
<dbReference type="GO" id="GO:0003677">
    <property type="term" value="F:DNA binding"/>
    <property type="evidence" value="ECO:0007669"/>
    <property type="project" value="UniProtKB-UniRule"/>
</dbReference>
<dbReference type="GO" id="GO:0003887">
    <property type="term" value="F:DNA-directed DNA polymerase activity"/>
    <property type="evidence" value="ECO:0007669"/>
    <property type="project" value="UniProtKB-UniRule"/>
</dbReference>
<dbReference type="GO" id="GO:0046872">
    <property type="term" value="F:metal ion binding"/>
    <property type="evidence" value="ECO:0007669"/>
    <property type="project" value="UniProtKB-UniRule"/>
</dbReference>
<dbReference type="GO" id="GO:0003964">
    <property type="term" value="F:RNA-directed DNA polymerase activity"/>
    <property type="evidence" value="ECO:0007669"/>
    <property type="project" value="UniProtKB-UniRule"/>
</dbReference>
<dbReference type="GO" id="GO:0004523">
    <property type="term" value="F:RNA-DNA hybrid ribonuclease activity"/>
    <property type="evidence" value="ECO:0007669"/>
    <property type="project" value="UniProtKB-UniRule"/>
</dbReference>
<dbReference type="GO" id="GO:0006260">
    <property type="term" value="P:DNA replication"/>
    <property type="evidence" value="ECO:0007669"/>
    <property type="project" value="UniProtKB-UniRule"/>
</dbReference>
<dbReference type="GO" id="GO:0052170">
    <property type="term" value="P:symbiont-mediated suppression of host innate immune response"/>
    <property type="evidence" value="ECO:0007669"/>
    <property type="project" value="UniProtKB-UniRule"/>
</dbReference>
<dbReference type="FunFam" id="3.30.70.270:FF:000009">
    <property type="entry name" value="Protein P"/>
    <property type="match status" value="1"/>
</dbReference>
<dbReference type="Gene3D" id="3.30.70.270">
    <property type="match status" value="1"/>
</dbReference>
<dbReference type="Gene3D" id="3.10.10.10">
    <property type="entry name" value="HIV Type 1 Reverse Transcriptase, subunit A, domain 1"/>
    <property type="match status" value="1"/>
</dbReference>
<dbReference type="HAMAP" id="MF_04073">
    <property type="entry name" value="HBV_DPOL"/>
    <property type="match status" value="1"/>
</dbReference>
<dbReference type="InterPro" id="IPR043502">
    <property type="entry name" value="DNA/RNA_pol_sf"/>
</dbReference>
<dbReference type="InterPro" id="IPR001462">
    <property type="entry name" value="DNApol_viral_C"/>
</dbReference>
<dbReference type="InterPro" id="IPR000201">
    <property type="entry name" value="DNApol_viral_N"/>
</dbReference>
<dbReference type="InterPro" id="IPR037531">
    <property type="entry name" value="HBV_DPOL"/>
</dbReference>
<dbReference type="InterPro" id="IPR043128">
    <property type="entry name" value="Rev_trsase/Diguanyl_cyclase"/>
</dbReference>
<dbReference type="InterPro" id="IPR000477">
    <property type="entry name" value="RT_dom"/>
</dbReference>
<dbReference type="InterPro" id="IPR051320">
    <property type="entry name" value="Viral_Replic_Matur_Polypro"/>
</dbReference>
<dbReference type="PANTHER" id="PTHR33064">
    <property type="entry name" value="POL PROTEIN"/>
    <property type="match status" value="1"/>
</dbReference>
<dbReference type="PANTHER" id="PTHR33064:SF37">
    <property type="entry name" value="RIBONUCLEASE H"/>
    <property type="match status" value="1"/>
</dbReference>
<dbReference type="Pfam" id="PF00336">
    <property type="entry name" value="DNA_pol_viral_C"/>
    <property type="match status" value="1"/>
</dbReference>
<dbReference type="Pfam" id="PF00242">
    <property type="entry name" value="DNA_pol_viral_N"/>
    <property type="match status" value="1"/>
</dbReference>
<dbReference type="Pfam" id="PF00078">
    <property type="entry name" value="RVT_1"/>
    <property type="match status" value="1"/>
</dbReference>
<dbReference type="SUPFAM" id="SSF56672">
    <property type="entry name" value="DNA/RNA polymerases"/>
    <property type="match status" value="1"/>
</dbReference>
<dbReference type="PROSITE" id="PS50878">
    <property type="entry name" value="RT_POL"/>
    <property type="match status" value="1"/>
</dbReference>
<organismHost>
    <name type="scientific">Homo sapiens</name>
    <name type="common">Human</name>
    <dbReference type="NCBI Taxonomy" id="9606"/>
</organismHost>
<organismHost>
    <name type="scientific">Pan troglodytes</name>
    <name type="common">Chimpanzee</name>
    <dbReference type="NCBI Taxonomy" id="9598"/>
</organismHost>